<comment type="function">
    <text evidence="2">Pro-inflammatory cytokine primarily involved in epithelial barrier repair, polarized T-helper 1 (Th1) cell and natural killer (NK) cell immune responses. Upon binding to IL18R1 and IL18RAP, forms a signaling ternary complex which activates NF-kappa-B, triggering synthesis of inflammatory mediators. Synergizes with IL12/interleukin-12 to induce IFNG synthesis from T-helper 1 (Th1) cells and natural killer (NK) cells. Involved in transduction of inflammation downstream of pyroptosis: its mature form is specifically released in the extracellular milieu by passing through the gasdermin-D (GSDMD) pore.</text>
</comment>
<comment type="subunit">
    <text evidence="2">Forms a ternary complex with ligand-binding receptor subunit IL18R1 and signaling receptor subunit IL18RAP at the plasma membrane. Mature IL18 first binds to IL18R1 forming a low affinity binary complex, which then interacts with IL18RAP to form a high affinity ternary complex that signals inside the cell. Interacts with cargo receptor TMED10; the interaction mediates the translocation from the cytoplasm into the ERGIC (endoplasmic reticulum-Golgi intermediate compartment) and thereby secretion.</text>
</comment>
<comment type="subcellular location">
    <subcellularLocation>
        <location evidence="2">Cytoplasm</location>
        <location evidence="2">Cytosol</location>
    </subcellularLocation>
    <subcellularLocation>
        <location evidence="2">Secreted</location>
    </subcellularLocation>
    <text evidence="2">The precursor is cytosolic. In response to inflammasome-activating signals, cleaved and secreted. Mature form is secreted and released in the extracellular milieu by passing through the gasdermin-D (GSDMD) pore. In contrast, the precursor form is not released, due to the presence of an acidic region that is proteolytically removed by CASP1, CASP4 or CASP5 during maturation. The secretion is dependent on protein unfolding and facilitated by the cargo receptor TMED10.</text>
</comment>
<comment type="PTM">
    <text evidence="2">The pro-IL-18 precursor is processed by CASP1, CASP4 or CASP5 to yield its mature, active form. The pro-IL-18 precursor features autoinhibitory interactions between the propeptide and the post-cleavage-site region, preventing recognition by the IL18R1 receptor. Processing by CASP1, CASP4 or CASP5 induces conformational changes to generate critical receptor-binding sites. The mature form is then secreted and released in the extracellular milieu by passing through the gasdermin-D (GSDMD) pore. In contrast, cleavage by CASP3 inactivates IL18.</text>
</comment>
<comment type="similarity">
    <text evidence="3">Belongs to the IL-1 family.</text>
</comment>
<organism>
    <name type="scientific">Sus scrofa</name>
    <name type="common">Pig</name>
    <dbReference type="NCBI Taxonomy" id="9823"/>
    <lineage>
        <taxon>Eukaryota</taxon>
        <taxon>Metazoa</taxon>
        <taxon>Chordata</taxon>
        <taxon>Craniata</taxon>
        <taxon>Vertebrata</taxon>
        <taxon>Euteleostomi</taxon>
        <taxon>Mammalia</taxon>
        <taxon>Eutheria</taxon>
        <taxon>Laurasiatheria</taxon>
        <taxon>Artiodactyla</taxon>
        <taxon>Suina</taxon>
        <taxon>Suidae</taxon>
        <taxon>Sus</taxon>
    </lineage>
</organism>
<reference key="1">
    <citation type="submission" date="1998-06" db="EMBL/GenBank/DDBJ databases">
        <authorList>
            <person name="Foss D.L."/>
            <person name="Murtaugh M.P."/>
        </authorList>
    </citation>
    <scope>NUCLEOTIDE SEQUENCE [MRNA]</scope>
</reference>
<reference key="2">
    <citation type="submission" date="1997-02" db="EMBL/GenBank/DDBJ databases">
        <authorList>
            <person name="Penha-Goncalves M.N."/>
            <person name="Logan N.A."/>
            <person name="Nicolson L."/>
            <person name="Onions D.E."/>
        </authorList>
    </citation>
    <scope>NUCLEOTIDE SEQUENCE [MRNA]</scope>
</reference>
<reference key="3">
    <citation type="submission" date="1997-12" db="EMBL/GenBank/DDBJ databases">
        <authorList>
            <person name="Muneta Y."/>
            <person name="Mori Y."/>
        </authorList>
    </citation>
    <scope>NUCLEOTIDE SEQUENCE [MRNA]</scope>
</reference>
<reference key="4">
    <citation type="journal article" date="2000" name="Immunogenetics">
        <title>Cloning, chromosomal location, and tissue expression of the gene for pig interleukin-18.</title>
        <authorList>
            <person name="Fournout S."/>
            <person name="Dozois C.M."/>
            <person name="Yerle M."/>
            <person name="Pinton P."/>
            <person name="Fairbrother J.M."/>
            <person name="Oswald E."/>
            <person name="Oswald I.P."/>
        </authorList>
    </citation>
    <scope>NUCLEOTIDE SEQUENCE [MRNA]</scope>
    <source>
        <tissue>Intestine</tissue>
    </source>
</reference>
<reference key="5">
    <citation type="submission" date="2006-04" db="EMBL/GenBank/DDBJ databases">
        <title>Cloning and sequencing of the pig interleukin-18.</title>
        <authorList>
            <person name="Zheng L."/>
            <person name="Cui B."/>
            <person name="Chen H."/>
            <person name="Fang Z."/>
            <person name="Chen R."/>
        </authorList>
    </citation>
    <scope>NUCLEOTIDE SEQUENCE [MRNA]</scope>
</reference>
<dbReference type="EMBL" id="U68701">
    <property type="protein sequence ID" value="AAC18415.1"/>
    <property type="molecule type" value="mRNA"/>
</dbReference>
<dbReference type="EMBL" id="Y11132">
    <property type="protein sequence ID" value="CAA72014.1"/>
    <property type="molecule type" value="mRNA"/>
</dbReference>
<dbReference type="EMBL" id="AB010003">
    <property type="protein sequence ID" value="BAA24135.1"/>
    <property type="molecule type" value="mRNA"/>
</dbReference>
<dbReference type="EMBL" id="AF191088">
    <property type="protein sequence ID" value="AAF71200.1"/>
    <property type="molecule type" value="mRNA"/>
</dbReference>
<dbReference type="EMBL" id="DQ499825">
    <property type="protein sequence ID" value="ABF55514.1"/>
    <property type="molecule type" value="mRNA"/>
</dbReference>
<dbReference type="RefSeq" id="NP_999162.1">
    <property type="nucleotide sequence ID" value="NM_213997.1"/>
</dbReference>
<dbReference type="RefSeq" id="XP_005667383.1">
    <property type="nucleotide sequence ID" value="XM_005667326.2"/>
</dbReference>
<dbReference type="SMR" id="O19073"/>
<dbReference type="FunCoup" id="O19073">
    <property type="interactions" value="210"/>
</dbReference>
<dbReference type="STRING" id="9823.ENSSSCP00000070167"/>
<dbReference type="PaxDb" id="9823-ENSSSCP00000015962"/>
<dbReference type="Ensembl" id="ENSSSCT00015087460.1">
    <property type="protein sequence ID" value="ENSSSCP00015035634.1"/>
    <property type="gene ID" value="ENSSSCG00015063504.1"/>
</dbReference>
<dbReference type="Ensembl" id="ENSSSCT00070015985.1">
    <property type="protein sequence ID" value="ENSSSCP00070013224.1"/>
    <property type="gene ID" value="ENSSSCG00070008274.1"/>
</dbReference>
<dbReference type="Ensembl" id="ENSSSCT00115010046">
    <property type="protein sequence ID" value="ENSSSCP00115009457"/>
    <property type="gene ID" value="ENSSSCG00115005720"/>
</dbReference>
<dbReference type="GeneID" id="397057"/>
<dbReference type="KEGG" id="ssc:397057"/>
<dbReference type="CTD" id="3606"/>
<dbReference type="eggNOG" id="ENOG502SDJZ">
    <property type="taxonomic scope" value="Eukaryota"/>
</dbReference>
<dbReference type="InParanoid" id="O19073"/>
<dbReference type="OMA" id="RQFYKFE"/>
<dbReference type="OrthoDB" id="8535973at2759"/>
<dbReference type="TreeFam" id="TF336297"/>
<dbReference type="Reactome" id="R-SSC-448706">
    <property type="pathway name" value="Interleukin-1 processing"/>
</dbReference>
<dbReference type="Reactome" id="R-SSC-5620971">
    <property type="pathway name" value="Pyroptosis"/>
</dbReference>
<dbReference type="Reactome" id="R-SSC-9012546">
    <property type="pathway name" value="Interleukin-18 signaling"/>
</dbReference>
<dbReference type="Proteomes" id="UP000008227">
    <property type="component" value="Unplaced"/>
</dbReference>
<dbReference type="Proteomes" id="UP000314985">
    <property type="component" value="Chromosome 9"/>
</dbReference>
<dbReference type="Proteomes" id="UP000694570">
    <property type="component" value="Unplaced"/>
</dbReference>
<dbReference type="Proteomes" id="UP000694571">
    <property type="component" value="Unplaced"/>
</dbReference>
<dbReference type="Proteomes" id="UP000694720">
    <property type="component" value="Unplaced"/>
</dbReference>
<dbReference type="Proteomes" id="UP000694722">
    <property type="component" value="Unplaced"/>
</dbReference>
<dbReference type="Proteomes" id="UP000694723">
    <property type="component" value="Unplaced"/>
</dbReference>
<dbReference type="Proteomes" id="UP000694724">
    <property type="component" value="Unplaced"/>
</dbReference>
<dbReference type="Proteomes" id="UP000694725">
    <property type="component" value="Unplaced"/>
</dbReference>
<dbReference type="Proteomes" id="UP000694726">
    <property type="component" value="Unplaced"/>
</dbReference>
<dbReference type="Proteomes" id="UP000694727">
    <property type="component" value="Unplaced"/>
</dbReference>
<dbReference type="Proteomes" id="UP000694728">
    <property type="component" value="Unplaced"/>
</dbReference>
<dbReference type="Bgee" id="ENSSSCG00000015037">
    <property type="expression patterns" value="Expressed in mesenteric lymph node and 43 other cell types or tissues"/>
</dbReference>
<dbReference type="ExpressionAtlas" id="O19073">
    <property type="expression patterns" value="baseline and differential"/>
</dbReference>
<dbReference type="GO" id="GO:0005829">
    <property type="term" value="C:cytosol"/>
    <property type="evidence" value="ECO:0007669"/>
    <property type="project" value="UniProtKB-SubCell"/>
</dbReference>
<dbReference type="GO" id="GO:0005615">
    <property type="term" value="C:extracellular space"/>
    <property type="evidence" value="ECO:0000318"/>
    <property type="project" value="GO_Central"/>
</dbReference>
<dbReference type="GO" id="GO:0005125">
    <property type="term" value="F:cytokine activity"/>
    <property type="evidence" value="ECO:0000315"/>
    <property type="project" value="UniProtKB"/>
</dbReference>
<dbReference type="GO" id="GO:0045515">
    <property type="term" value="F:interleukin-18 receptor binding"/>
    <property type="evidence" value="ECO:0000250"/>
    <property type="project" value="UniProtKB"/>
</dbReference>
<dbReference type="GO" id="GO:0001525">
    <property type="term" value="P:angiogenesis"/>
    <property type="evidence" value="ECO:0000250"/>
    <property type="project" value="UniProtKB"/>
</dbReference>
<dbReference type="GO" id="GO:0071222">
    <property type="term" value="P:cellular response to lipopolysaccharide"/>
    <property type="evidence" value="ECO:0000318"/>
    <property type="project" value="GO_Central"/>
</dbReference>
<dbReference type="GO" id="GO:0019221">
    <property type="term" value="P:cytokine-mediated signaling pathway"/>
    <property type="evidence" value="ECO:0000318"/>
    <property type="project" value="GO_Central"/>
</dbReference>
<dbReference type="GO" id="GO:0050830">
    <property type="term" value="P:defense response to Gram-positive bacterium"/>
    <property type="evidence" value="ECO:0000250"/>
    <property type="project" value="UniProtKB"/>
</dbReference>
<dbReference type="GO" id="GO:0061436">
    <property type="term" value="P:establishment of skin barrier"/>
    <property type="evidence" value="ECO:0000250"/>
    <property type="project" value="UniProtKB"/>
</dbReference>
<dbReference type="GO" id="GO:0008625">
    <property type="term" value="P:extrinsic apoptotic signaling pathway via death domain receptors"/>
    <property type="evidence" value="ECO:0000314"/>
    <property type="project" value="UniProtKB"/>
</dbReference>
<dbReference type="GO" id="GO:0006955">
    <property type="term" value="P:immune response"/>
    <property type="evidence" value="ECO:0000318"/>
    <property type="project" value="GO_Central"/>
</dbReference>
<dbReference type="GO" id="GO:0006954">
    <property type="term" value="P:inflammatory response"/>
    <property type="evidence" value="ECO:0000318"/>
    <property type="project" value="GO_Central"/>
</dbReference>
<dbReference type="GO" id="GO:0035655">
    <property type="term" value="P:interleukin-18-mediated signaling pathway"/>
    <property type="evidence" value="ECO:0000250"/>
    <property type="project" value="UniProtKB"/>
</dbReference>
<dbReference type="GO" id="GO:0042104">
    <property type="term" value="P:positive regulation of activated T cell proliferation"/>
    <property type="evidence" value="ECO:0000250"/>
    <property type="project" value="UniProtKB"/>
</dbReference>
<dbReference type="GO" id="GO:0008284">
    <property type="term" value="P:positive regulation of cell population proliferation"/>
    <property type="evidence" value="ECO:0000314"/>
    <property type="project" value="UniProtKB"/>
</dbReference>
<dbReference type="GO" id="GO:0050729">
    <property type="term" value="P:positive regulation of inflammatory response"/>
    <property type="evidence" value="ECO:0000250"/>
    <property type="project" value="UniProtKB"/>
</dbReference>
<dbReference type="GO" id="GO:0051092">
    <property type="term" value="P:positive regulation of NF-kappaB transcription factor activity"/>
    <property type="evidence" value="ECO:0000250"/>
    <property type="project" value="UniProtKB"/>
</dbReference>
<dbReference type="GO" id="GO:2000556">
    <property type="term" value="P:positive regulation of T-helper 1 cell cytokine production"/>
    <property type="evidence" value="ECO:0000250"/>
    <property type="project" value="UniProtKB"/>
</dbReference>
<dbReference type="GO" id="GO:0032729">
    <property type="term" value="P:positive regulation of type II interferon production"/>
    <property type="evidence" value="ECO:0000314"/>
    <property type="project" value="UniProtKB"/>
</dbReference>
<dbReference type="CDD" id="cd23298">
    <property type="entry name" value="beta-trefoil_IL18"/>
    <property type="match status" value="1"/>
</dbReference>
<dbReference type="FunFam" id="2.80.10.50:FF:000043">
    <property type="entry name" value="Interleukin-18"/>
    <property type="match status" value="1"/>
</dbReference>
<dbReference type="Gene3D" id="2.80.10.50">
    <property type="match status" value="1"/>
</dbReference>
<dbReference type="InterPro" id="IPR015529">
    <property type="entry name" value="IL-18"/>
</dbReference>
<dbReference type="InterPro" id="IPR000975">
    <property type="entry name" value="IL-1_fam"/>
</dbReference>
<dbReference type="InterPro" id="IPR008996">
    <property type="entry name" value="IL1/FGF"/>
</dbReference>
<dbReference type="PANTHER" id="PTHR10078">
    <property type="entry name" value="INTERLEUKIN-1 FAMILY MEMBER"/>
    <property type="match status" value="1"/>
</dbReference>
<dbReference type="PANTHER" id="PTHR10078:SF35">
    <property type="entry name" value="INTERLEUKIN-18"/>
    <property type="match status" value="1"/>
</dbReference>
<dbReference type="Pfam" id="PF00340">
    <property type="entry name" value="IL1"/>
    <property type="match status" value="1"/>
</dbReference>
<dbReference type="PIRSF" id="PIRSF015162">
    <property type="entry name" value="Interleukin_18"/>
    <property type="match status" value="1"/>
</dbReference>
<dbReference type="PRINTS" id="PR01933">
    <property type="entry name" value="INTRLEUKIN18"/>
</dbReference>
<dbReference type="SUPFAM" id="SSF50353">
    <property type="entry name" value="Cytokine"/>
    <property type="match status" value="1"/>
</dbReference>
<feature type="propeptide" id="PRO_0000015347" evidence="1">
    <location>
        <begin position="1"/>
        <end position="35"/>
    </location>
</feature>
<feature type="chain" id="PRO_0000015348" description="Interleukin-18">
    <location>
        <begin position="36"/>
        <end position="192"/>
    </location>
</feature>
<feature type="site" description="Cleavage; by CASP1, CASP4 and CASP5" evidence="2">
    <location>
        <begin position="35"/>
        <end position="36"/>
    </location>
</feature>
<feature type="site" description="Cleavage; by CASP3" evidence="2">
    <location>
        <begin position="70"/>
        <end position="71"/>
    </location>
</feature>
<feature type="sequence conflict" description="In Ref. 5; ABF55514." evidence="3" ref="5">
    <original>I</original>
    <variation>V</variation>
    <location>
        <position position="184"/>
    </location>
</feature>
<sequence>MAAEPEDNCISFVEMKFINNTLYFVAENDEDLESDYFGKLEPKLSIIRNLNDQVLFINQGHQAVFEDMPDSDCSDNAPQTVFIIYMYKDSLTRGLAVTISVQCKKMSTLSCKNKTLSFKEMSPPDNIDDEGNDIIFFQRSVPGHDDKIQFESSLYKGYFLACKKENDLFKLILKEKDECGDKSIMFTVQNKN</sequence>
<proteinExistence type="evidence at transcript level"/>
<protein>
    <recommendedName>
        <fullName>Interleukin-18</fullName>
        <shortName>IL-18</shortName>
    </recommendedName>
    <alternativeName>
        <fullName>Interferon gamma-inducing factor</fullName>
        <shortName>IFN-gamma-inducing factor</shortName>
    </alternativeName>
    <alternativeName>
        <fullName>Interleukin-1 gamma</fullName>
        <shortName>IL-1 gamma</shortName>
    </alternativeName>
</protein>
<keyword id="KW-0202">Cytokine</keyword>
<keyword id="KW-0963">Cytoplasm</keyword>
<keyword id="KW-0395">Inflammatory response</keyword>
<keyword id="KW-1185">Reference proteome</keyword>
<keyword id="KW-0964">Secreted</keyword>
<accession>O19073</accession>
<accession>Q1HDI4</accession>
<gene>
    <name type="primary">IL18</name>
    <name type="synonym">IGIF</name>
</gene>
<name>IL18_PIG</name>
<evidence type="ECO:0000250" key="1">
    <source>
        <dbReference type="UniProtKB" id="P70380"/>
    </source>
</evidence>
<evidence type="ECO:0000250" key="2">
    <source>
        <dbReference type="UniProtKB" id="Q14116"/>
    </source>
</evidence>
<evidence type="ECO:0000305" key="3"/>